<reference key="1">
    <citation type="journal article" date="2007" name="Genome Biol.">
        <title>Characterization and modeling of the Haemophilus influenzae core and supragenomes based on the complete genomic sequences of Rd and 12 clinical nontypeable strains.</title>
        <authorList>
            <person name="Hogg J.S."/>
            <person name="Hu F.Z."/>
            <person name="Janto B."/>
            <person name="Boissy R."/>
            <person name="Hayes J."/>
            <person name="Keefe R."/>
            <person name="Post J.C."/>
            <person name="Ehrlich G.D."/>
        </authorList>
    </citation>
    <scope>NUCLEOTIDE SEQUENCE [LARGE SCALE GENOMIC DNA]</scope>
    <source>
        <strain>PittGG</strain>
    </source>
</reference>
<evidence type="ECO:0000255" key="1">
    <source>
        <dbReference type="HAMAP-Rule" id="MF_00129"/>
    </source>
</evidence>
<organism>
    <name type="scientific">Haemophilus influenzae (strain PittGG)</name>
    <dbReference type="NCBI Taxonomy" id="374931"/>
    <lineage>
        <taxon>Bacteria</taxon>
        <taxon>Pseudomonadati</taxon>
        <taxon>Pseudomonadota</taxon>
        <taxon>Gammaproteobacteria</taxon>
        <taxon>Pasteurellales</taxon>
        <taxon>Pasteurellaceae</taxon>
        <taxon>Haemophilus</taxon>
    </lineage>
</organism>
<sequence>MFYTETYDVIVIGGGHAGTEAALAPARMGFKTLLLTHNVDTLGQMSCNPAIGGIGKGHLVKEVDAMGGLMAHAADKAGIQFRTLNSSKGPAVRATRAQADRVLYRQAVRTALENQPNLDIFQQEATDILIEQDRVTGVSTKMGLIFRAKSVVLTAGTFLAGKIHIGLENYEGGRAGDPASVNLSHRLRDLGLRVNRLKTGTPPRIDARTINFDILAKQHGDEVLPVFSFMGSVDDHPQQIPCYITHTNEQTHEVIRNNLDRSPMYTGVIEGIGPRYCPSIEDKVMRFSDRNSHQIYLEPEGLTSNEVYPNGISTSLPFDVQMGIVNSMKGLENARIVKPGYAIEYDYFDPRDLKPTLETKSISGLFFAGQINGTTGYEEAAAQGLLAGINAGLYVQEKDAWYPRRDQSYTGVLVDDLCTLGTKEPYRVFTSRAEYRLLLREDNADIRLTPIAHELGLIDEARWARFNQKMENIEQERQRLRSIWLHPRSEYLEEANKVLGSPLVREASGEDLLRRPEMTYDILTSLTPYKPAMEDKEAVEQVEIAIKYQGYIEHQQEEIEKQKRHENTAIPANFDYNKVSGLSNEVRAKLEQHRPVSIGQASRISGITPAAISIILVNLKKQGMLKRGE</sequence>
<dbReference type="EMBL" id="CP000672">
    <property type="protein sequence ID" value="ABR00174.1"/>
    <property type="molecule type" value="Genomic_DNA"/>
</dbReference>
<dbReference type="SMR" id="A5UHB8"/>
<dbReference type="KEGG" id="hiq:CGSHiGG_06385"/>
<dbReference type="HOGENOM" id="CLU_007831_2_2_6"/>
<dbReference type="Proteomes" id="UP000001990">
    <property type="component" value="Chromosome"/>
</dbReference>
<dbReference type="GO" id="GO:0005829">
    <property type="term" value="C:cytosol"/>
    <property type="evidence" value="ECO:0007669"/>
    <property type="project" value="TreeGrafter"/>
</dbReference>
<dbReference type="GO" id="GO:0050660">
    <property type="term" value="F:flavin adenine dinucleotide binding"/>
    <property type="evidence" value="ECO:0007669"/>
    <property type="project" value="UniProtKB-UniRule"/>
</dbReference>
<dbReference type="GO" id="GO:0030488">
    <property type="term" value="P:tRNA methylation"/>
    <property type="evidence" value="ECO:0007669"/>
    <property type="project" value="TreeGrafter"/>
</dbReference>
<dbReference type="GO" id="GO:0002098">
    <property type="term" value="P:tRNA wobble uridine modification"/>
    <property type="evidence" value="ECO:0007669"/>
    <property type="project" value="InterPro"/>
</dbReference>
<dbReference type="FunFam" id="1.10.10.1800:FF:000001">
    <property type="entry name" value="tRNA uridine 5-carboxymethylaminomethyl modification enzyme MnmG"/>
    <property type="match status" value="1"/>
</dbReference>
<dbReference type="FunFam" id="1.10.150.570:FF:000001">
    <property type="entry name" value="tRNA uridine 5-carboxymethylaminomethyl modification enzyme MnmG"/>
    <property type="match status" value="1"/>
</dbReference>
<dbReference type="FunFam" id="3.50.50.60:FF:000002">
    <property type="entry name" value="tRNA uridine 5-carboxymethylaminomethyl modification enzyme MnmG"/>
    <property type="match status" value="1"/>
</dbReference>
<dbReference type="FunFam" id="3.50.50.60:FF:000010">
    <property type="entry name" value="tRNA uridine 5-carboxymethylaminomethyl modification enzyme MnmG"/>
    <property type="match status" value="1"/>
</dbReference>
<dbReference type="Gene3D" id="3.50.50.60">
    <property type="entry name" value="FAD/NAD(P)-binding domain"/>
    <property type="match status" value="2"/>
</dbReference>
<dbReference type="Gene3D" id="1.10.150.570">
    <property type="entry name" value="GidA associated domain, C-terminal subdomain"/>
    <property type="match status" value="1"/>
</dbReference>
<dbReference type="Gene3D" id="1.10.10.1800">
    <property type="entry name" value="tRNA uridine 5-carboxymethylaminomethyl modification enzyme MnmG/GidA"/>
    <property type="match status" value="1"/>
</dbReference>
<dbReference type="HAMAP" id="MF_00129">
    <property type="entry name" value="MnmG_GidA"/>
    <property type="match status" value="1"/>
</dbReference>
<dbReference type="InterPro" id="IPR036188">
    <property type="entry name" value="FAD/NAD-bd_sf"/>
</dbReference>
<dbReference type="InterPro" id="IPR049312">
    <property type="entry name" value="GIDA_C_N"/>
</dbReference>
<dbReference type="InterPro" id="IPR004416">
    <property type="entry name" value="MnmG"/>
</dbReference>
<dbReference type="InterPro" id="IPR002218">
    <property type="entry name" value="MnmG-rel"/>
</dbReference>
<dbReference type="InterPro" id="IPR020595">
    <property type="entry name" value="MnmG-rel_CS"/>
</dbReference>
<dbReference type="InterPro" id="IPR026904">
    <property type="entry name" value="MnmG_C"/>
</dbReference>
<dbReference type="InterPro" id="IPR047001">
    <property type="entry name" value="MnmG_C_subdom"/>
</dbReference>
<dbReference type="InterPro" id="IPR044920">
    <property type="entry name" value="MnmG_C_subdom_sf"/>
</dbReference>
<dbReference type="InterPro" id="IPR040131">
    <property type="entry name" value="MnmG_N"/>
</dbReference>
<dbReference type="NCBIfam" id="TIGR00136">
    <property type="entry name" value="mnmG_gidA"/>
    <property type="match status" value="1"/>
</dbReference>
<dbReference type="PANTHER" id="PTHR11806">
    <property type="entry name" value="GLUCOSE INHIBITED DIVISION PROTEIN A"/>
    <property type="match status" value="1"/>
</dbReference>
<dbReference type="PANTHER" id="PTHR11806:SF0">
    <property type="entry name" value="PROTEIN MTO1 HOMOLOG, MITOCHONDRIAL"/>
    <property type="match status" value="1"/>
</dbReference>
<dbReference type="Pfam" id="PF01134">
    <property type="entry name" value="GIDA"/>
    <property type="match status" value="1"/>
</dbReference>
<dbReference type="Pfam" id="PF21680">
    <property type="entry name" value="GIDA_C_1st"/>
    <property type="match status" value="1"/>
</dbReference>
<dbReference type="Pfam" id="PF13932">
    <property type="entry name" value="SAM_GIDA_C"/>
    <property type="match status" value="1"/>
</dbReference>
<dbReference type="PRINTS" id="PR00411">
    <property type="entry name" value="PNDRDTASEI"/>
</dbReference>
<dbReference type="SMART" id="SM01228">
    <property type="entry name" value="GIDA_assoc_3"/>
    <property type="match status" value="1"/>
</dbReference>
<dbReference type="SUPFAM" id="SSF51905">
    <property type="entry name" value="FAD/NAD(P)-binding domain"/>
    <property type="match status" value="1"/>
</dbReference>
<dbReference type="PROSITE" id="PS01280">
    <property type="entry name" value="GIDA_1"/>
    <property type="match status" value="1"/>
</dbReference>
<dbReference type="PROSITE" id="PS01281">
    <property type="entry name" value="GIDA_2"/>
    <property type="match status" value="1"/>
</dbReference>
<protein>
    <recommendedName>
        <fullName evidence="1">tRNA uridine 5-carboxymethylaminomethyl modification enzyme MnmG</fullName>
    </recommendedName>
    <alternativeName>
        <fullName evidence="1">Glucose-inhibited division protein A</fullName>
    </alternativeName>
</protein>
<comment type="function">
    <text evidence="1">NAD-binding protein involved in the addition of a carboxymethylaminomethyl (cmnm) group at the wobble position (U34) of certain tRNAs, forming tRNA-cmnm(5)s(2)U34.</text>
</comment>
<comment type="cofactor">
    <cofactor evidence="1">
        <name>FAD</name>
        <dbReference type="ChEBI" id="CHEBI:57692"/>
    </cofactor>
</comment>
<comment type="subunit">
    <text evidence="1">Homodimer. Heterotetramer of two MnmE and two MnmG subunits.</text>
</comment>
<comment type="subcellular location">
    <subcellularLocation>
        <location evidence="1">Cytoplasm</location>
    </subcellularLocation>
</comment>
<comment type="similarity">
    <text evidence="1">Belongs to the MnmG family.</text>
</comment>
<keyword id="KW-0963">Cytoplasm</keyword>
<keyword id="KW-0274">FAD</keyword>
<keyword id="KW-0285">Flavoprotein</keyword>
<keyword id="KW-0520">NAD</keyword>
<keyword id="KW-0819">tRNA processing</keyword>
<name>MNMG_HAEIG</name>
<proteinExistence type="inferred from homology"/>
<gene>
    <name evidence="1" type="primary">mnmG</name>
    <name evidence="1" type="synonym">gidA</name>
    <name type="ordered locus">CGSHiGG_06385</name>
</gene>
<feature type="chain" id="PRO_1000016606" description="tRNA uridine 5-carboxymethylaminomethyl modification enzyme MnmG">
    <location>
        <begin position="1"/>
        <end position="629"/>
    </location>
</feature>
<feature type="binding site" evidence="1">
    <location>
        <begin position="13"/>
        <end position="18"/>
    </location>
    <ligand>
        <name>FAD</name>
        <dbReference type="ChEBI" id="CHEBI:57692"/>
    </ligand>
</feature>
<feature type="binding site" evidence="1">
    <location>
        <begin position="273"/>
        <end position="287"/>
    </location>
    <ligand>
        <name>NAD(+)</name>
        <dbReference type="ChEBI" id="CHEBI:57540"/>
    </ligand>
</feature>
<accession>A5UHB8</accession>